<evidence type="ECO:0000255" key="1">
    <source>
        <dbReference type="HAMAP-Rule" id="MF_00751"/>
    </source>
</evidence>
<organism>
    <name type="scientific">Pyrobaculum neutrophilum (strain DSM 2338 / JCM 9278 / NBRC 100436 / V24Sta)</name>
    <name type="common">Thermoproteus neutrophilus</name>
    <dbReference type="NCBI Taxonomy" id="444157"/>
    <lineage>
        <taxon>Archaea</taxon>
        <taxon>Thermoproteota</taxon>
        <taxon>Thermoprotei</taxon>
        <taxon>Thermoproteales</taxon>
        <taxon>Thermoproteaceae</taxon>
        <taxon>Pyrobaculum</taxon>
    </lineage>
</organism>
<gene>
    <name evidence="1" type="primary">secG</name>
    <name type="ordered locus">Tneu_1234</name>
</gene>
<proteinExistence type="inferred from homology"/>
<protein>
    <recommendedName>
        <fullName evidence="1">Preprotein translocase subunit SecG</fullName>
    </recommendedName>
    <alternativeName>
        <fullName evidence="1">Protein transport protein Sec61 subunit beta homolog</fullName>
    </alternativeName>
</protein>
<feature type="chain" id="PRO_1000196955" description="Preprotein translocase subunit SecG">
    <location>
        <begin position="1"/>
        <end position="57"/>
    </location>
</feature>
<feature type="topological domain" description="Cytoplasmic" evidence="1">
    <location>
        <begin position="1"/>
        <end position="33"/>
    </location>
</feature>
<feature type="transmembrane region" description="Helical" evidence="1">
    <location>
        <begin position="34"/>
        <end position="55"/>
    </location>
</feature>
<feature type="topological domain" description="Extracellular" evidence="1">
    <location>
        <begin position="56"/>
        <end position="57"/>
    </location>
</feature>
<accession>B1Y8T2</accession>
<dbReference type="EMBL" id="CP001014">
    <property type="protein sequence ID" value="ACB40161.1"/>
    <property type="molecule type" value="Genomic_DNA"/>
</dbReference>
<dbReference type="RefSeq" id="WP_012350580.1">
    <property type="nucleotide sequence ID" value="NC_010525.1"/>
</dbReference>
<dbReference type="SMR" id="B1Y8T2"/>
<dbReference type="STRING" id="444157.Tneu_1234"/>
<dbReference type="GeneID" id="6166047"/>
<dbReference type="KEGG" id="tne:Tneu_1234"/>
<dbReference type="eggNOG" id="arCOG02957">
    <property type="taxonomic scope" value="Archaea"/>
</dbReference>
<dbReference type="HOGENOM" id="CLU_208205_2_1_2"/>
<dbReference type="OrthoDB" id="28749at2157"/>
<dbReference type="Proteomes" id="UP000001694">
    <property type="component" value="Chromosome"/>
</dbReference>
<dbReference type="GO" id="GO:0005886">
    <property type="term" value="C:plasma membrane"/>
    <property type="evidence" value="ECO:0007669"/>
    <property type="project" value="UniProtKB-SubCell"/>
</dbReference>
<dbReference type="GO" id="GO:0015031">
    <property type="term" value="P:protein transport"/>
    <property type="evidence" value="ECO:0007669"/>
    <property type="project" value="UniProtKB-UniRule"/>
</dbReference>
<dbReference type="HAMAP" id="MF_00751">
    <property type="entry name" value="SecG"/>
    <property type="match status" value="1"/>
</dbReference>
<dbReference type="InterPro" id="IPR023531">
    <property type="entry name" value="Preprot_translocase_SecG"/>
</dbReference>
<dbReference type="InterPro" id="IPR016482">
    <property type="entry name" value="SecG/Sec61-beta/Sbh"/>
</dbReference>
<dbReference type="NCBIfam" id="NF002318">
    <property type="entry name" value="PRK01253.1"/>
    <property type="match status" value="1"/>
</dbReference>
<dbReference type="Pfam" id="PF03911">
    <property type="entry name" value="Sec61_beta"/>
    <property type="match status" value="1"/>
</dbReference>
<reference key="1">
    <citation type="submission" date="2008-03" db="EMBL/GenBank/DDBJ databases">
        <title>Complete sequence of Thermoproteus neutrophilus V24Sta.</title>
        <authorList>
            <consortium name="US DOE Joint Genome Institute"/>
            <person name="Copeland A."/>
            <person name="Lucas S."/>
            <person name="Lapidus A."/>
            <person name="Glavina del Rio T."/>
            <person name="Dalin E."/>
            <person name="Tice H."/>
            <person name="Bruce D."/>
            <person name="Goodwin L."/>
            <person name="Pitluck S."/>
            <person name="Sims D."/>
            <person name="Brettin T."/>
            <person name="Detter J.C."/>
            <person name="Han C."/>
            <person name="Kuske C.R."/>
            <person name="Schmutz J."/>
            <person name="Larimer F."/>
            <person name="Land M."/>
            <person name="Hauser L."/>
            <person name="Kyrpides N."/>
            <person name="Mikhailova N."/>
            <person name="Biddle J.F."/>
            <person name="Zhang Z."/>
            <person name="Fitz-Gibbon S.T."/>
            <person name="Lowe T.M."/>
            <person name="Saltikov C."/>
            <person name="House C.H."/>
            <person name="Richardson P."/>
        </authorList>
    </citation>
    <scope>NUCLEOTIDE SEQUENCE [LARGE SCALE GENOMIC DNA]</scope>
    <source>
        <strain>DSM 2338 / JCM 9278 / NBRC 100436 / V24Sta</strain>
    </source>
</reference>
<keyword id="KW-1003">Cell membrane</keyword>
<keyword id="KW-0472">Membrane</keyword>
<keyword id="KW-0653">Protein transport</keyword>
<keyword id="KW-0811">Translocation</keyword>
<keyword id="KW-0812">Transmembrane</keyword>
<keyword id="KW-1133">Transmembrane helix</keyword>
<keyword id="KW-0813">Transport</keyword>
<name>SECG_PYRNV</name>
<sequence>MARRRRYEGLNPFVAAGLIKFSEEGELERIKLTPKSAVVISVALIAAILVLNLIHPL</sequence>
<comment type="function">
    <text evidence="1">Involved in protein export. The function of the beta subunit is unknown, but it may be involved in stabilization of the trimeric complex.</text>
</comment>
<comment type="subunit">
    <text evidence="1">Component of the protein translocase complex. Heterotrimer consisting of alpha (SecY), beta (SecG) and gamma (SecE) subunits. Can form oligomers of the heterotrimer.</text>
</comment>
<comment type="subcellular location">
    <subcellularLocation>
        <location evidence="1">Cell membrane</location>
        <topology evidence="1">Single-pass membrane protein</topology>
    </subcellularLocation>
</comment>
<comment type="similarity">
    <text evidence="1">Belongs to the SEC61-beta family.</text>
</comment>